<reference key="1">
    <citation type="submission" date="2007-09" db="EMBL/GenBank/DDBJ databases">
        <title>Complete genome sequence of Rickettsia canadensis.</title>
        <authorList>
            <person name="Madan A."/>
            <person name="Fahey J."/>
            <person name="Helton E."/>
            <person name="Ketteman M."/>
            <person name="Madan A."/>
            <person name="Rodrigues S."/>
            <person name="Sanchez A."/>
            <person name="Whiting M."/>
            <person name="Dasch G."/>
            <person name="Eremeeva M."/>
        </authorList>
    </citation>
    <scope>NUCLEOTIDE SEQUENCE [LARGE SCALE GENOMIC DNA]</scope>
    <source>
        <strain>McKiel</strain>
    </source>
</reference>
<sequence length="188" mass="21308">MAIMSDKWIKEAVINQSMIKPFVEKQVRVHNKDKIISYGLSSYGYDARVSNEFKIFTNINSTTVDPKNFSEYNLVDREVDVCIIPPNSFALGRTIEYFKVPRDILVICVGKSTYARCGIIVNVTPLEPEWEGHVTLEFSNTTPLPAKIYANEGACQFLFLNSDQMCDTSYADRQGKYMKQVGVTLPLT</sequence>
<dbReference type="EC" id="3.5.4.13" evidence="1"/>
<dbReference type="EMBL" id="CP000409">
    <property type="protein sequence ID" value="ABV73019.1"/>
    <property type="molecule type" value="Genomic_DNA"/>
</dbReference>
<dbReference type="RefSeq" id="WP_012148220.1">
    <property type="nucleotide sequence ID" value="NC_009879.1"/>
</dbReference>
<dbReference type="SMR" id="A8EXD6"/>
<dbReference type="STRING" id="293613.A1E_00330"/>
<dbReference type="KEGG" id="rcm:A1E_00330"/>
<dbReference type="eggNOG" id="COG0717">
    <property type="taxonomic scope" value="Bacteria"/>
</dbReference>
<dbReference type="HOGENOM" id="CLU_087476_4_0_5"/>
<dbReference type="UniPathway" id="UPA00610">
    <property type="reaction ID" value="UER00665"/>
</dbReference>
<dbReference type="Proteomes" id="UP000007056">
    <property type="component" value="Chromosome"/>
</dbReference>
<dbReference type="GO" id="GO:0008829">
    <property type="term" value="F:dCTP deaminase activity"/>
    <property type="evidence" value="ECO:0007669"/>
    <property type="project" value="UniProtKB-UniRule"/>
</dbReference>
<dbReference type="GO" id="GO:0000166">
    <property type="term" value="F:nucleotide binding"/>
    <property type="evidence" value="ECO:0007669"/>
    <property type="project" value="UniProtKB-KW"/>
</dbReference>
<dbReference type="GO" id="GO:0006226">
    <property type="term" value="P:dUMP biosynthetic process"/>
    <property type="evidence" value="ECO:0007669"/>
    <property type="project" value="UniProtKB-UniPathway"/>
</dbReference>
<dbReference type="GO" id="GO:0006229">
    <property type="term" value="P:dUTP biosynthetic process"/>
    <property type="evidence" value="ECO:0007669"/>
    <property type="project" value="UniProtKB-UniRule"/>
</dbReference>
<dbReference type="CDD" id="cd07557">
    <property type="entry name" value="trimeric_dUTPase"/>
    <property type="match status" value="1"/>
</dbReference>
<dbReference type="FunFam" id="2.70.40.10:FF:000001">
    <property type="entry name" value="dCTP deaminase"/>
    <property type="match status" value="1"/>
</dbReference>
<dbReference type="Gene3D" id="2.70.40.10">
    <property type="match status" value="1"/>
</dbReference>
<dbReference type="HAMAP" id="MF_00146">
    <property type="entry name" value="dCTP_deaminase"/>
    <property type="match status" value="1"/>
</dbReference>
<dbReference type="InterPro" id="IPR011962">
    <property type="entry name" value="dCTP_deaminase"/>
</dbReference>
<dbReference type="InterPro" id="IPR036157">
    <property type="entry name" value="dUTPase-like_sf"/>
</dbReference>
<dbReference type="InterPro" id="IPR033704">
    <property type="entry name" value="dUTPase_trimeric"/>
</dbReference>
<dbReference type="NCBIfam" id="TIGR02274">
    <property type="entry name" value="dCTP_deam"/>
    <property type="match status" value="1"/>
</dbReference>
<dbReference type="PANTHER" id="PTHR42680">
    <property type="entry name" value="DCTP DEAMINASE"/>
    <property type="match status" value="1"/>
</dbReference>
<dbReference type="PANTHER" id="PTHR42680:SF3">
    <property type="entry name" value="DCTP DEAMINASE"/>
    <property type="match status" value="1"/>
</dbReference>
<dbReference type="Pfam" id="PF22769">
    <property type="entry name" value="DCD"/>
    <property type="match status" value="1"/>
</dbReference>
<dbReference type="SUPFAM" id="SSF51283">
    <property type="entry name" value="dUTPase-like"/>
    <property type="match status" value="1"/>
</dbReference>
<organism>
    <name type="scientific">Rickettsia canadensis (strain McKiel)</name>
    <dbReference type="NCBI Taxonomy" id="293613"/>
    <lineage>
        <taxon>Bacteria</taxon>
        <taxon>Pseudomonadati</taxon>
        <taxon>Pseudomonadota</taxon>
        <taxon>Alphaproteobacteria</taxon>
        <taxon>Rickettsiales</taxon>
        <taxon>Rickettsiaceae</taxon>
        <taxon>Rickettsieae</taxon>
        <taxon>Rickettsia</taxon>
        <taxon>belli group</taxon>
    </lineage>
</organism>
<feature type="chain" id="PRO_1000009801" description="dCTP deaminase">
    <location>
        <begin position="1"/>
        <end position="188"/>
    </location>
</feature>
<feature type="active site" description="Proton donor/acceptor" evidence="1">
    <location>
        <position position="137"/>
    </location>
</feature>
<feature type="binding site" evidence="1">
    <location>
        <begin position="111"/>
        <end position="116"/>
    </location>
    <ligand>
        <name>dCTP</name>
        <dbReference type="ChEBI" id="CHEBI:61481"/>
    </ligand>
</feature>
<feature type="binding site" evidence="1">
    <location>
        <begin position="135"/>
        <end position="137"/>
    </location>
    <ligand>
        <name>dCTP</name>
        <dbReference type="ChEBI" id="CHEBI:61481"/>
    </ligand>
</feature>
<feature type="binding site" evidence="1">
    <location>
        <position position="156"/>
    </location>
    <ligand>
        <name>dCTP</name>
        <dbReference type="ChEBI" id="CHEBI:61481"/>
    </ligand>
</feature>
<feature type="binding site" evidence="1">
    <location>
        <position position="170"/>
    </location>
    <ligand>
        <name>dCTP</name>
        <dbReference type="ChEBI" id="CHEBI:61481"/>
    </ligand>
</feature>
<feature type="binding site" evidence="1">
    <location>
        <position position="179"/>
    </location>
    <ligand>
        <name>dCTP</name>
        <dbReference type="ChEBI" id="CHEBI:61481"/>
    </ligand>
</feature>
<feature type="binding site" evidence="1">
    <location>
        <position position="180"/>
    </location>
    <ligand>
        <name>dCTP</name>
        <dbReference type="ChEBI" id="CHEBI:61481"/>
    </ligand>
</feature>
<accession>A8EXD6</accession>
<gene>
    <name evidence="1" type="primary">dcd</name>
    <name type="ordered locus">A1E_00330</name>
</gene>
<evidence type="ECO:0000255" key="1">
    <source>
        <dbReference type="HAMAP-Rule" id="MF_00146"/>
    </source>
</evidence>
<proteinExistence type="inferred from homology"/>
<keyword id="KW-0378">Hydrolase</keyword>
<keyword id="KW-0546">Nucleotide metabolism</keyword>
<keyword id="KW-0547">Nucleotide-binding</keyword>
<comment type="function">
    <text evidence="1">Catalyzes the deamination of dCTP to dUTP.</text>
</comment>
<comment type="catalytic activity">
    <reaction evidence="1">
        <text>dCTP + H2O + H(+) = dUTP + NH4(+)</text>
        <dbReference type="Rhea" id="RHEA:22680"/>
        <dbReference type="ChEBI" id="CHEBI:15377"/>
        <dbReference type="ChEBI" id="CHEBI:15378"/>
        <dbReference type="ChEBI" id="CHEBI:28938"/>
        <dbReference type="ChEBI" id="CHEBI:61481"/>
        <dbReference type="ChEBI" id="CHEBI:61555"/>
        <dbReference type="EC" id="3.5.4.13"/>
    </reaction>
</comment>
<comment type="pathway">
    <text evidence="1">Pyrimidine metabolism; dUMP biosynthesis; dUMP from dCTP (dUTP route): step 1/2.</text>
</comment>
<comment type="subunit">
    <text evidence="1">Homotrimer.</text>
</comment>
<comment type="similarity">
    <text evidence="1">Belongs to the dCTP deaminase family.</text>
</comment>
<name>DCD_RICCK</name>
<protein>
    <recommendedName>
        <fullName evidence="1">dCTP deaminase</fullName>
        <ecNumber evidence="1">3.5.4.13</ecNumber>
    </recommendedName>
    <alternativeName>
        <fullName evidence="1">Deoxycytidine triphosphate deaminase</fullName>
    </alternativeName>
</protein>